<feature type="chain" id="PRO_1000205932" description="3-hydroxydecanoyl-[acyl-carrier-protein] dehydratase">
    <location>
        <begin position="1"/>
        <end position="172"/>
    </location>
</feature>
<feature type="active site" evidence="1">
    <location>
        <position position="71"/>
    </location>
</feature>
<protein>
    <recommendedName>
        <fullName evidence="1">3-hydroxydecanoyl-[acyl-carrier-protein] dehydratase</fullName>
        <ecNumber evidence="1">4.2.1.59</ecNumber>
    </recommendedName>
    <alternativeName>
        <fullName evidence="1">3-hydroxyacyl-[acyl-carrier-protein] dehydratase FabA</fullName>
    </alternativeName>
    <alternativeName>
        <fullName evidence="1">Beta-hydroxydecanoyl thioester dehydrase</fullName>
    </alternativeName>
    <alternativeName>
        <fullName evidence="1">Trans-2-decenoyl-[acyl-carrier-protein] isomerase</fullName>
        <ecNumber evidence="1">5.3.3.14</ecNumber>
    </alternativeName>
</protein>
<organism>
    <name type="scientific">Escherichia coli (strain K12 / MC4100 / BW2952)</name>
    <dbReference type="NCBI Taxonomy" id="595496"/>
    <lineage>
        <taxon>Bacteria</taxon>
        <taxon>Pseudomonadati</taxon>
        <taxon>Pseudomonadota</taxon>
        <taxon>Gammaproteobacteria</taxon>
        <taxon>Enterobacterales</taxon>
        <taxon>Enterobacteriaceae</taxon>
        <taxon>Escherichia</taxon>
    </lineage>
</organism>
<name>FABA_ECOBW</name>
<gene>
    <name evidence="1" type="primary">fabA</name>
    <name type="ordered locus">BWG_0806</name>
</gene>
<reference key="1">
    <citation type="journal article" date="2009" name="J. Bacteriol.">
        <title>Genomic sequencing reveals regulatory mutations and recombinational events in the widely used MC4100 lineage of Escherichia coli K-12.</title>
        <authorList>
            <person name="Ferenci T."/>
            <person name="Zhou Z."/>
            <person name="Betteridge T."/>
            <person name="Ren Y."/>
            <person name="Liu Y."/>
            <person name="Feng L."/>
            <person name="Reeves P.R."/>
            <person name="Wang L."/>
        </authorList>
    </citation>
    <scope>NUCLEOTIDE SEQUENCE [LARGE SCALE GENOMIC DNA]</scope>
    <source>
        <strain>K12 / MC4100 / BW2952</strain>
    </source>
</reference>
<proteinExistence type="inferred from homology"/>
<accession>C4ZQ80</accession>
<sequence length="172" mass="18969">MVDKRESYTKEDLLASGRGELFGAKGPQLPAPNMLMMDRVVKMTETGGNFDKGYVEAELDINPDLWFFGCHFIGDPVMPGCLGLDAMWQLVGFYLGWLGGEGKGRALGVGEVKFTGQVLPTAKKVTYRIHFKRIVNRRLIMGLADGEVLVDGRLIYTASDLKVGLFQDTSAF</sequence>
<dbReference type="EC" id="4.2.1.59" evidence="1"/>
<dbReference type="EC" id="5.3.3.14" evidence="1"/>
<dbReference type="EMBL" id="CP001396">
    <property type="protein sequence ID" value="ACR62058.1"/>
    <property type="molecule type" value="Genomic_DNA"/>
</dbReference>
<dbReference type="RefSeq" id="WP_000227927.1">
    <property type="nucleotide sequence ID" value="NC_012759.1"/>
</dbReference>
<dbReference type="SMR" id="C4ZQ80"/>
<dbReference type="GeneID" id="93776460"/>
<dbReference type="KEGG" id="ebw:BWG_0806"/>
<dbReference type="HOGENOM" id="CLU_097925_0_0_6"/>
<dbReference type="UniPathway" id="UPA00094"/>
<dbReference type="GO" id="GO:0005737">
    <property type="term" value="C:cytoplasm"/>
    <property type="evidence" value="ECO:0007669"/>
    <property type="project" value="UniProtKB-SubCell"/>
</dbReference>
<dbReference type="GO" id="GO:0019171">
    <property type="term" value="F:(3R)-hydroxyacyl-[acyl-carrier-protein] dehydratase activity"/>
    <property type="evidence" value="ECO:0007669"/>
    <property type="project" value="UniProtKB-UniRule"/>
</dbReference>
<dbReference type="GO" id="GO:0034017">
    <property type="term" value="F:trans-2-decenoyl-acyl-carrier-protein isomerase activity"/>
    <property type="evidence" value="ECO:0007669"/>
    <property type="project" value="UniProtKB-UniRule"/>
</dbReference>
<dbReference type="GO" id="GO:0006636">
    <property type="term" value="P:unsaturated fatty acid biosynthetic process"/>
    <property type="evidence" value="ECO:0007669"/>
    <property type="project" value="UniProtKB-UniRule"/>
</dbReference>
<dbReference type="CDD" id="cd01287">
    <property type="entry name" value="FabA"/>
    <property type="match status" value="1"/>
</dbReference>
<dbReference type="FunFam" id="3.10.129.10:FF:000003">
    <property type="entry name" value="3-hydroxydecanoyl-[acyl-carrier-protein] dehydratase"/>
    <property type="match status" value="1"/>
</dbReference>
<dbReference type="Gene3D" id="3.10.129.10">
    <property type="entry name" value="Hotdog Thioesterase"/>
    <property type="match status" value="1"/>
</dbReference>
<dbReference type="HAMAP" id="MF_00405">
    <property type="entry name" value="FabA"/>
    <property type="match status" value="1"/>
</dbReference>
<dbReference type="InterPro" id="IPR010083">
    <property type="entry name" value="FabA"/>
</dbReference>
<dbReference type="InterPro" id="IPR013114">
    <property type="entry name" value="FabA_FabZ"/>
</dbReference>
<dbReference type="InterPro" id="IPR029069">
    <property type="entry name" value="HotDog_dom_sf"/>
</dbReference>
<dbReference type="NCBIfam" id="TIGR01749">
    <property type="entry name" value="fabA"/>
    <property type="match status" value="1"/>
</dbReference>
<dbReference type="NCBIfam" id="NF003509">
    <property type="entry name" value="PRK05174.1"/>
    <property type="match status" value="1"/>
</dbReference>
<dbReference type="PANTHER" id="PTHR30272">
    <property type="entry name" value="3-HYDROXYACYL-[ACYL-CARRIER-PROTEIN] DEHYDRATASE"/>
    <property type="match status" value="1"/>
</dbReference>
<dbReference type="PANTHER" id="PTHR30272:SF8">
    <property type="entry name" value="3-HYDROXYDECANOYL-[ACYL-CARRIER-PROTEIN] DEHYDRATASE"/>
    <property type="match status" value="1"/>
</dbReference>
<dbReference type="Pfam" id="PF07977">
    <property type="entry name" value="FabA"/>
    <property type="match status" value="1"/>
</dbReference>
<dbReference type="SUPFAM" id="SSF54637">
    <property type="entry name" value="Thioesterase/thiol ester dehydrase-isomerase"/>
    <property type="match status" value="1"/>
</dbReference>
<evidence type="ECO:0000255" key="1">
    <source>
        <dbReference type="HAMAP-Rule" id="MF_00405"/>
    </source>
</evidence>
<keyword id="KW-0963">Cytoplasm</keyword>
<keyword id="KW-0275">Fatty acid biosynthesis</keyword>
<keyword id="KW-0276">Fatty acid metabolism</keyword>
<keyword id="KW-0413">Isomerase</keyword>
<keyword id="KW-0444">Lipid biosynthesis</keyword>
<keyword id="KW-0443">Lipid metabolism</keyword>
<keyword id="KW-0456">Lyase</keyword>
<comment type="function">
    <text evidence="1">Necessary for the introduction of cis unsaturation into fatty acids. Catalyzes the dehydration of (3R)-3-hydroxydecanoyl-ACP to E-(2)-decenoyl-ACP and then its isomerization to Z-(3)-decenoyl-ACP. Can catalyze the dehydratase reaction for beta-hydroxyacyl-ACPs with saturated chain lengths up to 16:0, being most active on intermediate chain length.</text>
</comment>
<comment type="catalytic activity">
    <reaction evidence="1">
        <text>a (3R)-hydroxyacyl-[ACP] = a (2E)-enoyl-[ACP] + H2O</text>
        <dbReference type="Rhea" id="RHEA:13097"/>
        <dbReference type="Rhea" id="RHEA-COMP:9925"/>
        <dbReference type="Rhea" id="RHEA-COMP:9945"/>
        <dbReference type="ChEBI" id="CHEBI:15377"/>
        <dbReference type="ChEBI" id="CHEBI:78784"/>
        <dbReference type="ChEBI" id="CHEBI:78827"/>
        <dbReference type="EC" id="4.2.1.59"/>
    </reaction>
</comment>
<comment type="catalytic activity">
    <reaction evidence="1">
        <text>(3R)-hydroxydecanoyl-[ACP] = (2E)-decenoyl-[ACP] + H2O</text>
        <dbReference type="Rhea" id="RHEA:41860"/>
        <dbReference type="Rhea" id="RHEA-COMP:9638"/>
        <dbReference type="Rhea" id="RHEA-COMP:9639"/>
        <dbReference type="ChEBI" id="CHEBI:15377"/>
        <dbReference type="ChEBI" id="CHEBI:78466"/>
        <dbReference type="ChEBI" id="CHEBI:78467"/>
    </reaction>
</comment>
<comment type="catalytic activity">
    <reaction evidence="1">
        <text>(2E)-decenoyl-[ACP] = (3Z)-decenoyl-[ACP]</text>
        <dbReference type="Rhea" id="RHEA:23568"/>
        <dbReference type="Rhea" id="RHEA-COMP:9639"/>
        <dbReference type="Rhea" id="RHEA-COMP:9927"/>
        <dbReference type="ChEBI" id="CHEBI:78467"/>
        <dbReference type="ChEBI" id="CHEBI:78798"/>
        <dbReference type="EC" id="5.3.3.14"/>
    </reaction>
</comment>
<comment type="pathway">
    <text evidence="1">Lipid metabolism; fatty acid biosynthesis.</text>
</comment>
<comment type="subunit">
    <text evidence="1">Homodimer.</text>
</comment>
<comment type="subcellular location">
    <subcellularLocation>
        <location evidence="1">Cytoplasm</location>
    </subcellularLocation>
</comment>
<comment type="similarity">
    <text evidence="1">Belongs to the thioester dehydratase family. FabA subfamily.</text>
</comment>